<sequence>MTVNLGMPTPPIPTLAPRRKTHQIKVGDVLVGGDAPISVQSMTTTKTHDVGATLQQIAALTAAGCDIVRVACPTDKDAEVLPIIAKRSQIPVIADIHFQPKYVFQAIEAGCGAVRVNPGNIRKFDDQIESICQAATEHGTSIRIGVNAGSLDKRLLDKYGAPTAEAMVESALWEASLFEQYGFRDFKISVKHHDPVVMIRAYEQLAAKCDYPLHLGVTEAGPAFQGTIKSAVAFGHLLAEGIGDTIRVSLSADPVEEVKVGIKILESLNLRPRGLEIVSCPSCGRCQVDVLTLANDVTDALEGIDAPLRVAVMGCVVNGLGEGREADLGVAAGNGKGKIFKHGEVIRTVPEGEIVQFLVQEANRMADEMDTTGAVEVTVS</sequence>
<dbReference type="EC" id="1.17.7.3" evidence="1"/>
<dbReference type="EMBL" id="AE017283">
    <property type="protein sequence ID" value="AAT83253.1"/>
    <property type="molecule type" value="Genomic_DNA"/>
</dbReference>
<dbReference type="SMR" id="Q6A7L2"/>
<dbReference type="EnsemblBacteria" id="AAT83253">
    <property type="protein sequence ID" value="AAT83253"/>
    <property type="gene ID" value="PPA1506"/>
</dbReference>
<dbReference type="KEGG" id="pac:PPA1506"/>
<dbReference type="PATRIC" id="fig|267747.3.peg.1551"/>
<dbReference type="eggNOG" id="COG0821">
    <property type="taxonomic scope" value="Bacteria"/>
</dbReference>
<dbReference type="HOGENOM" id="CLU_042258_0_0_11"/>
<dbReference type="UniPathway" id="UPA00056">
    <property type="reaction ID" value="UER00096"/>
</dbReference>
<dbReference type="Proteomes" id="UP000000603">
    <property type="component" value="Chromosome"/>
</dbReference>
<dbReference type="GO" id="GO:0051539">
    <property type="term" value="F:4 iron, 4 sulfur cluster binding"/>
    <property type="evidence" value="ECO:0007669"/>
    <property type="project" value="UniProtKB-UniRule"/>
</dbReference>
<dbReference type="GO" id="GO:0046429">
    <property type="term" value="F:4-hydroxy-3-methylbut-2-en-1-yl diphosphate synthase activity (ferredoxin)"/>
    <property type="evidence" value="ECO:0007669"/>
    <property type="project" value="UniProtKB-UniRule"/>
</dbReference>
<dbReference type="GO" id="GO:0141197">
    <property type="term" value="F:4-hydroxy-3-methylbut-2-enyl-diphosphate synthase activity (flavodoxin)"/>
    <property type="evidence" value="ECO:0007669"/>
    <property type="project" value="UniProtKB-EC"/>
</dbReference>
<dbReference type="GO" id="GO:0005506">
    <property type="term" value="F:iron ion binding"/>
    <property type="evidence" value="ECO:0007669"/>
    <property type="project" value="InterPro"/>
</dbReference>
<dbReference type="GO" id="GO:0019288">
    <property type="term" value="P:isopentenyl diphosphate biosynthetic process, methylerythritol 4-phosphate pathway"/>
    <property type="evidence" value="ECO:0007669"/>
    <property type="project" value="UniProtKB-UniRule"/>
</dbReference>
<dbReference type="GO" id="GO:0016114">
    <property type="term" value="P:terpenoid biosynthetic process"/>
    <property type="evidence" value="ECO:0007669"/>
    <property type="project" value="InterPro"/>
</dbReference>
<dbReference type="FunFam" id="3.20.20.20:FF:000001">
    <property type="entry name" value="4-hydroxy-3-methylbut-2-en-1-yl diphosphate synthase (flavodoxin)"/>
    <property type="match status" value="1"/>
</dbReference>
<dbReference type="Gene3D" id="3.20.20.20">
    <property type="entry name" value="Dihydropteroate synthase-like"/>
    <property type="match status" value="1"/>
</dbReference>
<dbReference type="Gene3D" id="3.30.413.10">
    <property type="entry name" value="Sulfite Reductase Hemoprotein, domain 1"/>
    <property type="match status" value="1"/>
</dbReference>
<dbReference type="HAMAP" id="MF_00159">
    <property type="entry name" value="IspG"/>
    <property type="match status" value="1"/>
</dbReference>
<dbReference type="InterPro" id="IPR011005">
    <property type="entry name" value="Dihydropteroate_synth-like_sf"/>
</dbReference>
<dbReference type="InterPro" id="IPR016425">
    <property type="entry name" value="IspG_bac"/>
</dbReference>
<dbReference type="InterPro" id="IPR004588">
    <property type="entry name" value="IspG_bac-typ"/>
</dbReference>
<dbReference type="InterPro" id="IPR045854">
    <property type="entry name" value="NO2/SO3_Rdtase_4Fe4S_sf"/>
</dbReference>
<dbReference type="NCBIfam" id="TIGR00612">
    <property type="entry name" value="ispG_gcpE"/>
    <property type="match status" value="1"/>
</dbReference>
<dbReference type="NCBIfam" id="NF001540">
    <property type="entry name" value="PRK00366.1"/>
    <property type="match status" value="1"/>
</dbReference>
<dbReference type="PANTHER" id="PTHR30454">
    <property type="entry name" value="4-HYDROXY-3-METHYLBUT-2-EN-1-YL DIPHOSPHATE SYNTHASE"/>
    <property type="match status" value="1"/>
</dbReference>
<dbReference type="PANTHER" id="PTHR30454:SF0">
    <property type="entry name" value="4-HYDROXY-3-METHYLBUT-2-EN-1-YL DIPHOSPHATE SYNTHASE (FERREDOXIN), CHLOROPLASTIC"/>
    <property type="match status" value="1"/>
</dbReference>
<dbReference type="Pfam" id="PF04551">
    <property type="entry name" value="GcpE"/>
    <property type="match status" value="1"/>
</dbReference>
<dbReference type="PIRSF" id="PIRSF004640">
    <property type="entry name" value="IspG"/>
    <property type="match status" value="1"/>
</dbReference>
<dbReference type="SUPFAM" id="SSF51717">
    <property type="entry name" value="Dihydropteroate synthetase-like"/>
    <property type="match status" value="1"/>
</dbReference>
<dbReference type="SUPFAM" id="SSF56014">
    <property type="entry name" value="Nitrite and sulphite reductase 4Fe-4S domain-like"/>
    <property type="match status" value="1"/>
</dbReference>
<gene>
    <name evidence="1" type="primary">ispG</name>
    <name type="ordered locus">PPA1506</name>
</gene>
<reference key="1">
    <citation type="journal article" date="2004" name="Science">
        <title>The complete genome sequence of Propionibacterium acnes, a commensal of human skin.</title>
        <authorList>
            <person name="Brueggemann H."/>
            <person name="Henne A."/>
            <person name="Hoster F."/>
            <person name="Liesegang H."/>
            <person name="Wiezer A."/>
            <person name="Strittmatter A."/>
            <person name="Hujer S."/>
            <person name="Duerre P."/>
            <person name="Gottschalk G."/>
        </authorList>
    </citation>
    <scope>NUCLEOTIDE SEQUENCE [LARGE SCALE GENOMIC DNA]</scope>
    <source>
        <strain>DSM 16379 / KPA171202</strain>
    </source>
</reference>
<evidence type="ECO:0000255" key="1">
    <source>
        <dbReference type="HAMAP-Rule" id="MF_00159"/>
    </source>
</evidence>
<keyword id="KW-0004">4Fe-4S</keyword>
<keyword id="KW-0408">Iron</keyword>
<keyword id="KW-0411">Iron-sulfur</keyword>
<keyword id="KW-0414">Isoprene biosynthesis</keyword>
<keyword id="KW-0479">Metal-binding</keyword>
<keyword id="KW-0560">Oxidoreductase</keyword>
<organism>
    <name type="scientific">Cutibacterium acnes (strain DSM 16379 / KPA171202)</name>
    <name type="common">Propionibacterium acnes</name>
    <dbReference type="NCBI Taxonomy" id="267747"/>
    <lineage>
        <taxon>Bacteria</taxon>
        <taxon>Bacillati</taxon>
        <taxon>Actinomycetota</taxon>
        <taxon>Actinomycetes</taxon>
        <taxon>Propionibacteriales</taxon>
        <taxon>Propionibacteriaceae</taxon>
        <taxon>Cutibacterium</taxon>
    </lineage>
</organism>
<comment type="function">
    <text evidence="1">Converts 2C-methyl-D-erythritol 2,4-cyclodiphosphate (ME-2,4cPP) into 1-hydroxy-2-methyl-2-(E)-butenyl 4-diphosphate.</text>
</comment>
<comment type="catalytic activity">
    <reaction evidence="1">
        <text>(2E)-4-hydroxy-3-methylbut-2-enyl diphosphate + oxidized [flavodoxin] + H2O + 2 H(+) = 2-C-methyl-D-erythritol 2,4-cyclic diphosphate + reduced [flavodoxin]</text>
        <dbReference type="Rhea" id="RHEA:43604"/>
        <dbReference type="Rhea" id="RHEA-COMP:10622"/>
        <dbReference type="Rhea" id="RHEA-COMP:10623"/>
        <dbReference type="ChEBI" id="CHEBI:15377"/>
        <dbReference type="ChEBI" id="CHEBI:15378"/>
        <dbReference type="ChEBI" id="CHEBI:57618"/>
        <dbReference type="ChEBI" id="CHEBI:58210"/>
        <dbReference type="ChEBI" id="CHEBI:58483"/>
        <dbReference type="ChEBI" id="CHEBI:128753"/>
        <dbReference type="EC" id="1.17.7.3"/>
    </reaction>
</comment>
<comment type="cofactor">
    <cofactor evidence="1">
        <name>[4Fe-4S] cluster</name>
        <dbReference type="ChEBI" id="CHEBI:49883"/>
    </cofactor>
    <text evidence="1">Binds 1 [4Fe-4S] cluster.</text>
</comment>
<comment type="pathway">
    <text evidence="1">Isoprenoid biosynthesis; isopentenyl diphosphate biosynthesis via DXP pathway; isopentenyl diphosphate from 1-deoxy-D-xylulose 5-phosphate: step 5/6.</text>
</comment>
<comment type="similarity">
    <text evidence="1">Belongs to the IspG family.</text>
</comment>
<name>ISPG_CUTAK</name>
<feature type="chain" id="PRO_0000190613" description="4-hydroxy-3-methylbut-2-en-1-yl diphosphate synthase (flavodoxin)">
    <location>
        <begin position="1"/>
        <end position="380"/>
    </location>
</feature>
<feature type="binding site" evidence="1">
    <location>
        <position position="280"/>
    </location>
    <ligand>
        <name>[4Fe-4S] cluster</name>
        <dbReference type="ChEBI" id="CHEBI:49883"/>
    </ligand>
</feature>
<feature type="binding site" evidence="1">
    <location>
        <position position="283"/>
    </location>
    <ligand>
        <name>[4Fe-4S] cluster</name>
        <dbReference type="ChEBI" id="CHEBI:49883"/>
    </ligand>
</feature>
<feature type="binding site" evidence="1">
    <location>
        <position position="315"/>
    </location>
    <ligand>
        <name>[4Fe-4S] cluster</name>
        <dbReference type="ChEBI" id="CHEBI:49883"/>
    </ligand>
</feature>
<feature type="binding site" evidence="1">
    <location>
        <position position="322"/>
    </location>
    <ligand>
        <name>[4Fe-4S] cluster</name>
        <dbReference type="ChEBI" id="CHEBI:49883"/>
    </ligand>
</feature>
<protein>
    <recommendedName>
        <fullName evidence="1">4-hydroxy-3-methylbut-2-en-1-yl diphosphate synthase (flavodoxin)</fullName>
        <ecNumber evidence="1">1.17.7.3</ecNumber>
    </recommendedName>
    <alternativeName>
        <fullName evidence="1">1-hydroxy-2-methyl-2-(E)-butenyl 4-diphosphate synthase</fullName>
    </alternativeName>
</protein>
<proteinExistence type="inferred from homology"/>
<accession>Q6A7L2</accession>